<accession>Q8RY81</accession>
<accession>F4IEI9</accession>
<accession>Q9SSR5</accession>
<evidence type="ECO:0000250" key="1">
    <source>
        <dbReference type="UniProtKB" id="Q9H488"/>
    </source>
</evidence>
<evidence type="ECO:0000255" key="2"/>
<evidence type="ECO:0000255" key="3">
    <source>
        <dbReference type="PROSITE-ProRule" id="PRU00498"/>
    </source>
</evidence>
<evidence type="ECO:0000305" key="4"/>
<evidence type="ECO:0000312" key="5">
    <source>
        <dbReference type="Araport" id="AT1G52630"/>
    </source>
</evidence>
<evidence type="ECO:0000312" key="6">
    <source>
        <dbReference type="EMBL" id="AAD55602.1"/>
    </source>
</evidence>
<evidence type="ECO:0000312" key="7">
    <source>
        <dbReference type="EMBL" id="ARJ31413.1"/>
    </source>
</evidence>
<keyword id="KW-0025">Alternative splicing</keyword>
<keyword id="KW-0119">Carbohydrate metabolism</keyword>
<keyword id="KW-0294">Fucose metabolism</keyword>
<keyword id="KW-0325">Glycoprotein</keyword>
<keyword id="KW-0328">Glycosyltransferase</keyword>
<keyword id="KW-0472">Membrane</keyword>
<keyword id="KW-1185">Reference proteome</keyword>
<keyword id="KW-0735">Signal-anchor</keyword>
<keyword id="KW-0808">Transferase</keyword>
<keyword id="KW-0812">Transmembrane</keyword>
<keyword id="KW-1133">Transmembrane helix</keyword>
<comment type="pathway">
    <text evidence="4">Glycan metabolism.</text>
</comment>
<comment type="subcellular location">
    <subcellularLocation>
        <location evidence="2">Membrane</location>
        <topology evidence="4">Single-pass type II membrane protein</topology>
    </subcellularLocation>
</comment>
<comment type="alternative products">
    <event type="alternative splicing"/>
    <isoform>
        <id>Q8RY81-1</id>
        <name>1</name>
        <sequence type="displayed"/>
    </isoform>
    <isoform>
        <id>Q8RY81-2</id>
        <name>2</name>
        <sequence type="described" ref="VSP_059169"/>
    </isoform>
</comment>
<comment type="similarity">
    <text evidence="4">Belongs to the glycosyltransferase GT106 family.</text>
</comment>
<comment type="sequence caution" evidence="4">
    <conflict type="erroneous gene model prediction">
        <sequence resource="EMBL-CDS" id="AAD55602"/>
    </conflict>
</comment>
<proteinExistence type="evidence at transcript level"/>
<name>OFT13_ARATH</name>
<reference key="1">
    <citation type="submission" date="2017-04" db="EMBL/GenBank/DDBJ databases">
        <title>Arabidopsis glycosyltransferases: an update.</title>
        <authorList>
            <person name="Zeng W."/>
            <person name="Gluza P."/>
            <person name="Heazlewood J."/>
        </authorList>
    </citation>
    <scope>NUCLEOTIDE SEQUENCE [MRNA] (ISOFORM 1)</scope>
    <source>
        <strain>cv. Columbia</strain>
    </source>
</reference>
<reference key="2">
    <citation type="journal article" date="2000" name="Nature">
        <title>Sequence and analysis of chromosome 1 of the plant Arabidopsis thaliana.</title>
        <authorList>
            <person name="Theologis A."/>
            <person name="Ecker J.R."/>
            <person name="Palm C.J."/>
            <person name="Federspiel N.A."/>
            <person name="Kaul S."/>
            <person name="White O."/>
            <person name="Alonso J."/>
            <person name="Altafi H."/>
            <person name="Araujo R."/>
            <person name="Bowman C.L."/>
            <person name="Brooks S.Y."/>
            <person name="Buehler E."/>
            <person name="Chan A."/>
            <person name="Chao Q."/>
            <person name="Chen H."/>
            <person name="Cheuk R.F."/>
            <person name="Chin C.W."/>
            <person name="Chung M.K."/>
            <person name="Conn L."/>
            <person name="Conway A.B."/>
            <person name="Conway A.R."/>
            <person name="Creasy T.H."/>
            <person name="Dewar K."/>
            <person name="Dunn P."/>
            <person name="Etgu P."/>
            <person name="Feldblyum T.V."/>
            <person name="Feng J.-D."/>
            <person name="Fong B."/>
            <person name="Fujii C.Y."/>
            <person name="Gill J.E."/>
            <person name="Goldsmith A.D."/>
            <person name="Haas B."/>
            <person name="Hansen N.F."/>
            <person name="Hughes B."/>
            <person name="Huizar L."/>
            <person name="Hunter J.L."/>
            <person name="Jenkins J."/>
            <person name="Johnson-Hopson C."/>
            <person name="Khan S."/>
            <person name="Khaykin E."/>
            <person name="Kim C.J."/>
            <person name="Koo H.L."/>
            <person name="Kremenetskaia I."/>
            <person name="Kurtz D.B."/>
            <person name="Kwan A."/>
            <person name="Lam B."/>
            <person name="Langin-Hooper S."/>
            <person name="Lee A."/>
            <person name="Lee J.M."/>
            <person name="Lenz C.A."/>
            <person name="Li J.H."/>
            <person name="Li Y.-P."/>
            <person name="Lin X."/>
            <person name="Liu S.X."/>
            <person name="Liu Z.A."/>
            <person name="Luros J.S."/>
            <person name="Maiti R."/>
            <person name="Marziali A."/>
            <person name="Militscher J."/>
            <person name="Miranda M."/>
            <person name="Nguyen M."/>
            <person name="Nierman W.C."/>
            <person name="Osborne B.I."/>
            <person name="Pai G."/>
            <person name="Peterson J."/>
            <person name="Pham P.K."/>
            <person name="Rizzo M."/>
            <person name="Rooney T."/>
            <person name="Rowley D."/>
            <person name="Sakano H."/>
            <person name="Salzberg S.L."/>
            <person name="Schwartz J.R."/>
            <person name="Shinn P."/>
            <person name="Southwick A.M."/>
            <person name="Sun H."/>
            <person name="Tallon L.J."/>
            <person name="Tambunga G."/>
            <person name="Toriumi M.J."/>
            <person name="Town C.D."/>
            <person name="Utterback T."/>
            <person name="Van Aken S."/>
            <person name="Vaysberg M."/>
            <person name="Vysotskaia V.S."/>
            <person name="Walker M."/>
            <person name="Wu D."/>
            <person name="Yu G."/>
            <person name="Fraser C.M."/>
            <person name="Venter J.C."/>
            <person name="Davis R.W."/>
        </authorList>
    </citation>
    <scope>NUCLEOTIDE SEQUENCE [LARGE SCALE GENOMIC DNA]</scope>
    <source>
        <strain>cv. Columbia</strain>
    </source>
</reference>
<reference key="3">
    <citation type="journal article" date="2017" name="Plant J.">
        <title>Araport11: a complete reannotation of the Arabidopsis thaliana reference genome.</title>
        <authorList>
            <person name="Cheng C.Y."/>
            <person name="Krishnakumar V."/>
            <person name="Chan A.P."/>
            <person name="Thibaud-Nissen F."/>
            <person name="Schobel S."/>
            <person name="Town C.D."/>
        </authorList>
    </citation>
    <scope>GENOME REANNOTATION</scope>
    <source>
        <strain>cv. Columbia</strain>
    </source>
</reference>
<reference key="4">
    <citation type="journal article" date="2003" name="Science">
        <title>Empirical analysis of transcriptional activity in the Arabidopsis genome.</title>
        <authorList>
            <person name="Yamada K."/>
            <person name="Lim J."/>
            <person name="Dale J.M."/>
            <person name="Chen H."/>
            <person name="Shinn P."/>
            <person name="Palm C.J."/>
            <person name="Southwick A.M."/>
            <person name="Wu H.C."/>
            <person name="Kim C.J."/>
            <person name="Nguyen M."/>
            <person name="Pham P.K."/>
            <person name="Cheuk R.F."/>
            <person name="Karlin-Newmann G."/>
            <person name="Liu S.X."/>
            <person name="Lam B."/>
            <person name="Sakano H."/>
            <person name="Wu T."/>
            <person name="Yu G."/>
            <person name="Miranda M."/>
            <person name="Quach H.L."/>
            <person name="Tripp M."/>
            <person name="Chang C.H."/>
            <person name="Lee J.M."/>
            <person name="Toriumi M.J."/>
            <person name="Chan M.M."/>
            <person name="Tang C.C."/>
            <person name="Onodera C.S."/>
            <person name="Deng J.M."/>
            <person name="Akiyama K."/>
            <person name="Ansari Y."/>
            <person name="Arakawa T."/>
            <person name="Banh J."/>
            <person name="Banno F."/>
            <person name="Bowser L."/>
            <person name="Brooks S.Y."/>
            <person name="Carninci P."/>
            <person name="Chao Q."/>
            <person name="Choy N."/>
            <person name="Enju A."/>
            <person name="Goldsmith A.D."/>
            <person name="Gurjal M."/>
            <person name="Hansen N.F."/>
            <person name="Hayashizaki Y."/>
            <person name="Johnson-Hopson C."/>
            <person name="Hsuan V.W."/>
            <person name="Iida K."/>
            <person name="Karnes M."/>
            <person name="Khan S."/>
            <person name="Koesema E."/>
            <person name="Ishida J."/>
            <person name="Jiang P.X."/>
            <person name="Jones T."/>
            <person name="Kawai J."/>
            <person name="Kamiya A."/>
            <person name="Meyers C."/>
            <person name="Nakajima M."/>
            <person name="Narusaka M."/>
            <person name="Seki M."/>
            <person name="Sakurai T."/>
            <person name="Satou M."/>
            <person name="Tamse R."/>
            <person name="Vaysberg M."/>
            <person name="Wallender E.K."/>
            <person name="Wong C."/>
            <person name="Yamamura Y."/>
            <person name="Yuan S."/>
            <person name="Shinozaki K."/>
            <person name="Davis R.W."/>
            <person name="Theologis A."/>
            <person name="Ecker J.R."/>
        </authorList>
    </citation>
    <scope>NUCLEOTIDE SEQUENCE [LARGE SCALE MRNA] (ISOFORM 1)</scope>
    <source>
        <strain>cv. Columbia</strain>
    </source>
</reference>
<reference key="5">
    <citation type="journal article" date="2012" name="Front. Plant Sci.">
        <title>Plant glycosyltransferases beyond CAZy: a perspective on DUF families.</title>
        <authorList>
            <person name="Hansen S.F."/>
            <person name="Harholt J."/>
            <person name="Oikawa A."/>
            <person name="Scheller H.V."/>
        </authorList>
    </citation>
    <scope>GENE FAMILY</scope>
    <scope>REVIEW</scope>
</reference>
<reference key="6">
    <citation type="journal article" date="2012" name="PLoS ONE">
        <title>The FRIABLE1 gene product affects cell adhesion in Arabidopsis.</title>
        <authorList>
            <person name="Neumetzler L."/>
            <person name="Humphrey T."/>
            <person name="Lumba S."/>
            <person name="Snyder S."/>
            <person name="Yeats T.H."/>
            <person name="Usadel B."/>
            <person name="Vasilevski A."/>
            <person name="Patel J."/>
            <person name="Rose J.K."/>
            <person name="Persson S."/>
            <person name="Bonetta D."/>
        </authorList>
    </citation>
    <scope>GENE FAMILY</scope>
</reference>
<reference key="7">
    <citation type="journal article" date="2012" name="PLoS ONE">
        <title>Identification of putative rhamnogalacturonan-II specific glycosyltransferases in Arabidopsis using a combination of bioinformatics approaches.</title>
        <authorList>
            <person name="Voxeur A."/>
            <person name="Andre A."/>
            <person name="Breton C."/>
            <person name="Lerouge P."/>
        </authorList>
    </citation>
    <scope>GENE FAMILY</scope>
</reference>
<reference key="8">
    <citation type="journal article" date="2013" name="Plant J.">
        <title>Identification of an additional protein involved in mannan biosynthesis.</title>
        <authorList>
            <person name="Wang Y."/>
            <person name="Mortimer J.C."/>
            <person name="Davis J."/>
            <person name="Dupree P."/>
            <person name="Keegstra K."/>
        </authorList>
    </citation>
    <scope>GENE FAMILY</scope>
</reference>
<reference key="9">
    <citation type="journal article" date="2014" name="Plant J.">
        <title>The plant glycosyltransferase clone collection for functional genomics.</title>
        <authorList>
            <person name="Lao J."/>
            <person name="Oikawa A."/>
            <person name="Bromley J.R."/>
            <person name="McInerney P."/>
            <person name="Suttangkakul A."/>
            <person name="Smith-Moritz A.M."/>
            <person name="Plahar H."/>
            <person name="Chiu T.-Y."/>
            <person name="Gonzalez Fernandez-Nino S.M.G."/>
            <person name="Ebert B."/>
            <person name="Yang F."/>
            <person name="Christiansen K.M."/>
            <person name="Hansen S.F."/>
            <person name="Stonebloom S."/>
            <person name="Adams P.D."/>
            <person name="Ronald P.C."/>
            <person name="Hillson N.J."/>
            <person name="Hadi M.Z."/>
            <person name="Vega-Sanchez M.E."/>
            <person name="Loque D."/>
            <person name="Scheller H.V."/>
            <person name="Heazlewood J.L."/>
        </authorList>
    </citation>
    <scope>WEB RESOURCE</scope>
</reference>
<feature type="chain" id="PRO_5010847298" description="O-fucosyltransferase 13">
    <location>
        <begin position="1"/>
        <end position="439"/>
    </location>
</feature>
<feature type="transmembrane region" description="Helical; Signal-anchor for type II membrane protein" evidence="4">
    <location>
        <begin position="8"/>
        <end position="28"/>
    </location>
</feature>
<feature type="binding site" evidence="1">
    <location>
        <begin position="238"/>
        <end position="240"/>
    </location>
    <ligand>
        <name>substrate</name>
    </ligand>
</feature>
<feature type="glycosylation site" description="N-linked (GlcNAc...) asparagine" evidence="3">
    <location>
        <position position="104"/>
    </location>
</feature>
<feature type="glycosylation site" description="N-linked (GlcNAc...) asparagine" evidence="3">
    <location>
        <position position="119"/>
    </location>
</feature>
<feature type="glycosylation site" description="N-linked (GlcNAc...) asparagine" evidence="3">
    <location>
        <position position="293"/>
    </location>
</feature>
<feature type="splice variant" id="VSP_059169" description="In isoform 2.">
    <location>
        <begin position="1"/>
        <end position="88"/>
    </location>
</feature>
<organism>
    <name type="scientific">Arabidopsis thaliana</name>
    <name type="common">Mouse-ear cress</name>
    <dbReference type="NCBI Taxonomy" id="3702"/>
    <lineage>
        <taxon>Eukaryota</taxon>
        <taxon>Viridiplantae</taxon>
        <taxon>Streptophyta</taxon>
        <taxon>Embryophyta</taxon>
        <taxon>Tracheophyta</taxon>
        <taxon>Spermatophyta</taxon>
        <taxon>Magnoliopsida</taxon>
        <taxon>eudicotyledons</taxon>
        <taxon>Gunneridae</taxon>
        <taxon>Pentapetalae</taxon>
        <taxon>rosids</taxon>
        <taxon>malvids</taxon>
        <taxon>Brassicales</taxon>
        <taxon>Brassicaceae</taxon>
        <taxon>Camelineae</taxon>
        <taxon>Arabidopsis</taxon>
    </lineage>
</organism>
<gene>
    <name evidence="4" type="primary">OFUT13</name>
    <name evidence="5" type="ordered locus">At1g52630</name>
    <name evidence="6" type="ORF">F6D8.15</name>
</gene>
<sequence>MIGSPVKPLFVFVLTFSLLLVVILLSPSPHILQIPFPSGSSVGSSDIWSVKRIMEWRPCKWWLQGHLTPLPAKTNGYIRVDCYGGLNQMRRDLCDGVGIARLLNATLVLPKFEVAAYWNESSGFADVFDVDYFIQKMSGYIEVVKELPKDIASKEPFKVDCSKRKGQFDYIESVLPLLLEHHYISFTPAMSQRRDRYPEYARATLCQACYSAIHLTSSLEKKAVELFDAIPKPFLSLHLRFEPDMVAYSQCEYPNLSPSSIAAIEAARADRKPWTGELAQTWRKRGKCPLTPNETVLMLQSLNIPTSTNIYLAAGDGLMEMEGFTSVYTNVFTKSVLLNQEDFTRMHGNTKAALDYHVSINSDAYVATYFGNMDKIVAAMRTYKQMHNTLFLSRKAFAELTSQGLEGAELKKALWEVHKSDFAIGRGFALPDCFCEFEL</sequence>
<protein>
    <recommendedName>
        <fullName evidence="4">O-fucosyltransferase 13</fullName>
        <shortName evidence="4">O-FucT-13</shortName>
        <ecNumber evidence="4">2.4.1.-</ecNumber>
    </recommendedName>
    <alternativeName>
        <fullName evidence="7">O-fucosyltransferase family protein</fullName>
    </alternativeName>
</protein>
<dbReference type="EC" id="2.4.1.-" evidence="4"/>
<dbReference type="EMBL" id="KY906049">
    <property type="protein sequence ID" value="ARJ31413.1"/>
    <property type="molecule type" value="mRNA"/>
</dbReference>
<dbReference type="EMBL" id="AC008016">
    <property type="protein sequence ID" value="AAD55602.1"/>
    <property type="status" value="ALT_SEQ"/>
    <property type="molecule type" value="Genomic_DNA"/>
</dbReference>
<dbReference type="EMBL" id="CP002684">
    <property type="protein sequence ID" value="AEE32831.1"/>
    <property type="molecule type" value="Genomic_DNA"/>
</dbReference>
<dbReference type="EMBL" id="CP002684">
    <property type="protein sequence ID" value="AEE32832.1"/>
    <property type="molecule type" value="Genomic_DNA"/>
</dbReference>
<dbReference type="EMBL" id="AY074537">
    <property type="protein sequence ID" value="AAL69505.1"/>
    <property type="molecule type" value="mRNA"/>
</dbReference>
<dbReference type="EMBL" id="AY096411">
    <property type="protein sequence ID" value="AAM20051.1"/>
    <property type="molecule type" value="mRNA"/>
</dbReference>
<dbReference type="PIR" id="B96567">
    <property type="entry name" value="B96567"/>
</dbReference>
<dbReference type="RefSeq" id="NP_175672.2">
    <molecule id="Q8RY81-1"/>
    <property type="nucleotide sequence ID" value="NM_104141.5"/>
</dbReference>
<dbReference type="RefSeq" id="NP_974008.1">
    <molecule id="Q8RY81-2"/>
    <property type="nucleotide sequence ID" value="NM_202279.4"/>
</dbReference>
<dbReference type="FunCoup" id="Q8RY81">
    <property type="interactions" value="1736"/>
</dbReference>
<dbReference type="GlyCosmos" id="Q8RY81">
    <property type="glycosylation" value="3 sites, No reported glycans"/>
</dbReference>
<dbReference type="GlyGen" id="Q8RY81">
    <property type="glycosylation" value="3 sites"/>
</dbReference>
<dbReference type="PaxDb" id="3702-AT1G52630.1"/>
<dbReference type="ProteomicsDB" id="239024">
    <molecule id="Q8RY81-1"/>
</dbReference>
<dbReference type="EnsemblPlants" id="AT1G52630.1">
    <molecule id="Q8RY81-1"/>
    <property type="protein sequence ID" value="AT1G52630.1"/>
    <property type="gene ID" value="AT1G52630"/>
</dbReference>
<dbReference type="EnsemblPlants" id="AT1G52630.2">
    <molecule id="Q8RY81-2"/>
    <property type="protein sequence ID" value="AT1G52630.2"/>
    <property type="gene ID" value="AT1G52630"/>
</dbReference>
<dbReference type="GeneID" id="841695"/>
<dbReference type="Gramene" id="AT1G52630.1">
    <molecule id="Q8RY81-1"/>
    <property type="protein sequence ID" value="AT1G52630.1"/>
    <property type="gene ID" value="AT1G52630"/>
</dbReference>
<dbReference type="Gramene" id="AT1G52630.2">
    <molecule id="Q8RY81-2"/>
    <property type="protein sequence ID" value="AT1G52630.2"/>
    <property type="gene ID" value="AT1G52630"/>
</dbReference>
<dbReference type="KEGG" id="ath:AT1G52630"/>
<dbReference type="Araport" id="AT1G52630"/>
<dbReference type="TAIR" id="AT1G52630"/>
<dbReference type="eggNOG" id="ENOG502QPSR">
    <property type="taxonomic scope" value="Eukaryota"/>
</dbReference>
<dbReference type="InParanoid" id="Q8RY81"/>
<dbReference type="OMA" id="LEHKYIS"/>
<dbReference type="OrthoDB" id="1718146at2759"/>
<dbReference type="PhylomeDB" id="Q8RY81"/>
<dbReference type="PRO" id="PR:Q8RY81"/>
<dbReference type="Proteomes" id="UP000006548">
    <property type="component" value="Chromosome 1"/>
</dbReference>
<dbReference type="ExpressionAtlas" id="Q8RY81">
    <property type="expression patterns" value="baseline and differential"/>
</dbReference>
<dbReference type="GO" id="GO:0016020">
    <property type="term" value="C:membrane"/>
    <property type="evidence" value="ECO:0007669"/>
    <property type="project" value="UniProtKB-SubCell"/>
</dbReference>
<dbReference type="GO" id="GO:0016757">
    <property type="term" value="F:glycosyltransferase activity"/>
    <property type="evidence" value="ECO:0007669"/>
    <property type="project" value="UniProtKB-KW"/>
</dbReference>
<dbReference type="GO" id="GO:0006004">
    <property type="term" value="P:fucose metabolic process"/>
    <property type="evidence" value="ECO:0007669"/>
    <property type="project" value="UniProtKB-KW"/>
</dbReference>
<dbReference type="CDD" id="cd11299">
    <property type="entry name" value="O-FucT_plant"/>
    <property type="match status" value="1"/>
</dbReference>
<dbReference type="InterPro" id="IPR024709">
    <property type="entry name" value="FucosylTrfase_pln"/>
</dbReference>
<dbReference type="InterPro" id="IPR019378">
    <property type="entry name" value="GDP-Fuc_O-FucTrfase"/>
</dbReference>
<dbReference type="PANTHER" id="PTHR31741:SF2">
    <property type="entry name" value="O-FUCOSYLTRANSFERASE 13"/>
    <property type="match status" value="1"/>
</dbReference>
<dbReference type="PANTHER" id="PTHR31741">
    <property type="entry name" value="OS02G0726500 PROTEIN-RELATED"/>
    <property type="match status" value="1"/>
</dbReference>
<dbReference type="Pfam" id="PF10250">
    <property type="entry name" value="O-FucT"/>
    <property type="match status" value="1"/>
</dbReference>
<dbReference type="PIRSF" id="PIRSF009360">
    <property type="entry name" value="UCP009360"/>
    <property type="match status" value="1"/>
</dbReference>